<comment type="interaction">
    <interactant intactId="EBI-10256818">
        <id>Q7Z2X7</id>
    </interactant>
    <interactant intactId="EBI-748397">
        <id>P50222</id>
        <label>MEOX2</label>
    </interactant>
    <organismsDiffer>false</organismsDiffer>
    <experiments>3</experiments>
</comment>
<comment type="interaction">
    <interactant intactId="EBI-10256818">
        <id>Q7Z2X7</id>
    </interactant>
    <interactant intactId="EBI-717399">
        <id>Q9BSI4</id>
        <label>TINF2</label>
    </interactant>
    <organismsDiffer>false</organismsDiffer>
    <experiments>2</experiments>
</comment>
<comment type="similarity">
    <text evidence="2">Belongs to the GAGE family.</text>
</comment>
<feature type="chain" id="PRO_0000247362" description="P antigen family member 2">
    <location>
        <begin position="1"/>
        <end position="111"/>
    </location>
</feature>
<feature type="region of interest" description="Disordered" evidence="1">
    <location>
        <begin position="1"/>
        <end position="66"/>
    </location>
</feature>
<feature type="compositionally biased region" description="Polar residues" evidence="1">
    <location>
        <begin position="8"/>
        <end position="24"/>
    </location>
</feature>
<feature type="sequence variant" id="VAR_053099" description="In dbSNP:rs1845444.">
    <original>L</original>
    <variation>V</variation>
    <location>
        <position position="5"/>
    </location>
</feature>
<dbReference type="EMBL" id="AL590240">
    <property type="status" value="NOT_ANNOTATED_CDS"/>
    <property type="molecule type" value="Genomic_DNA"/>
</dbReference>
<dbReference type="EMBL" id="BC054022">
    <property type="protein sequence ID" value="AAH54022.1"/>
    <property type="molecule type" value="mRNA"/>
</dbReference>
<dbReference type="CCDS" id="CCDS14367.1"/>
<dbReference type="RefSeq" id="NP_997222.1">
    <property type="nucleotide sequence ID" value="NM_207339.4"/>
</dbReference>
<dbReference type="RefSeq" id="XP_016884842.1">
    <property type="nucleotide sequence ID" value="XM_017029353.2"/>
</dbReference>
<dbReference type="SMR" id="Q7Z2X7"/>
<dbReference type="BioGRID" id="128479">
    <property type="interactions" value="8"/>
</dbReference>
<dbReference type="FunCoup" id="Q7Z2X7">
    <property type="interactions" value="27"/>
</dbReference>
<dbReference type="IntAct" id="Q7Z2X7">
    <property type="interactions" value="9"/>
</dbReference>
<dbReference type="STRING" id="9606.ENSP00000364107"/>
<dbReference type="iPTMnet" id="Q7Z2X7"/>
<dbReference type="PhosphoSitePlus" id="Q7Z2X7"/>
<dbReference type="BioMuta" id="PAGE2"/>
<dbReference type="DMDM" id="74750038"/>
<dbReference type="jPOST" id="Q7Z2X7"/>
<dbReference type="MassIVE" id="Q7Z2X7"/>
<dbReference type="PaxDb" id="9606-ENSP00000364107"/>
<dbReference type="PeptideAtlas" id="Q7Z2X7"/>
<dbReference type="ProteomicsDB" id="68984"/>
<dbReference type="Pumba" id="Q7Z2X7"/>
<dbReference type="Antibodypedia" id="62243">
    <property type="antibodies" value="24 antibodies from 12 providers"/>
</dbReference>
<dbReference type="DNASU" id="203569"/>
<dbReference type="Ensembl" id="ENST00000374968.9">
    <property type="protein sequence ID" value="ENSP00000364107.4"/>
    <property type="gene ID" value="ENSG00000234068.7"/>
</dbReference>
<dbReference type="GeneID" id="203569"/>
<dbReference type="KEGG" id="hsa:203569"/>
<dbReference type="MANE-Select" id="ENST00000374968.9">
    <property type="protein sequence ID" value="ENSP00000364107.4"/>
    <property type="RefSeq nucleotide sequence ID" value="NM_207339.4"/>
    <property type="RefSeq protein sequence ID" value="NP_997222.1"/>
</dbReference>
<dbReference type="UCSC" id="uc004duf.2">
    <property type="organism name" value="human"/>
</dbReference>
<dbReference type="AGR" id="HGNC:31804"/>
<dbReference type="CTD" id="203569"/>
<dbReference type="DisGeNET" id="203569"/>
<dbReference type="GeneCards" id="PAGE2"/>
<dbReference type="HGNC" id="HGNC:31804">
    <property type="gene designation" value="PAGE2"/>
</dbReference>
<dbReference type="HPA" id="ENSG00000234068">
    <property type="expression patterns" value="Tissue enriched (testis)"/>
</dbReference>
<dbReference type="MIM" id="300738">
    <property type="type" value="gene"/>
</dbReference>
<dbReference type="neXtProt" id="NX_Q7Z2X7"/>
<dbReference type="OpenTargets" id="ENSG00000234068"/>
<dbReference type="PharmGKB" id="PA142671202"/>
<dbReference type="VEuPathDB" id="HostDB:ENSG00000234068"/>
<dbReference type="eggNOG" id="ENOG502TF3A">
    <property type="taxonomic scope" value="Eukaryota"/>
</dbReference>
<dbReference type="GeneTree" id="ENSGT00940000153097"/>
<dbReference type="InParanoid" id="Q7Z2X7"/>
<dbReference type="OMA" id="WELAEPK"/>
<dbReference type="OrthoDB" id="9538520at2759"/>
<dbReference type="PAN-GO" id="Q7Z2X7">
    <property type="GO annotations" value="0 GO annotations based on evolutionary models"/>
</dbReference>
<dbReference type="PhylomeDB" id="Q7Z2X7"/>
<dbReference type="TreeFam" id="TF340669"/>
<dbReference type="PathwayCommons" id="Q7Z2X7"/>
<dbReference type="SignaLink" id="Q7Z2X7"/>
<dbReference type="BioGRID-ORCS" id="203569">
    <property type="hits" value="15 hits in 658 CRISPR screens"/>
</dbReference>
<dbReference type="GenomeRNAi" id="203569"/>
<dbReference type="Pharos" id="Q7Z2X7">
    <property type="development level" value="Tdark"/>
</dbReference>
<dbReference type="PRO" id="PR:Q7Z2X7"/>
<dbReference type="Proteomes" id="UP000005640">
    <property type="component" value="Chromosome X"/>
</dbReference>
<dbReference type="RNAct" id="Q7Z2X7">
    <property type="molecule type" value="protein"/>
</dbReference>
<dbReference type="Bgee" id="ENSG00000234068">
    <property type="expression patterns" value="Expressed in male germ line stem cell (sensu Vertebrata) in testis and 90 other cell types or tissues"/>
</dbReference>
<dbReference type="ExpressionAtlas" id="Q7Z2X7">
    <property type="expression patterns" value="baseline and differential"/>
</dbReference>
<dbReference type="InterPro" id="IPR031320">
    <property type="entry name" value="GAGE"/>
</dbReference>
<dbReference type="InterPro" id="IPR008625">
    <property type="entry name" value="GAGE_fam"/>
</dbReference>
<dbReference type="PANTHER" id="PTHR14047:SF34">
    <property type="entry name" value="G ANTIGEN FAMILY E MEMBER 3-RELATED"/>
    <property type="match status" value="1"/>
</dbReference>
<dbReference type="PANTHER" id="PTHR14047">
    <property type="entry name" value="P ANTIGEN FAMILY MEMBER 5-RELATED"/>
    <property type="match status" value="1"/>
</dbReference>
<dbReference type="Pfam" id="PF05831">
    <property type="entry name" value="GAGE"/>
    <property type="match status" value="1"/>
</dbReference>
<dbReference type="SMART" id="SM01379">
    <property type="entry name" value="GAGE"/>
    <property type="match status" value="1"/>
</dbReference>
<protein>
    <recommendedName>
        <fullName>P antigen family member 2</fullName>
        <shortName>PAGE-2</shortName>
    </recommendedName>
    <alternativeName>
        <fullName>G antigen family C 2</fullName>
    </alternativeName>
    <alternativeName>
        <fullName>Prostate-associated gene 2 protein</fullName>
    </alternativeName>
</protein>
<accession>Q7Z2X7</accession>
<accession>Q5JRK7</accession>
<accession>Q5JRK8</accession>
<name>PAGE2_HUMAN</name>
<reference key="1">
    <citation type="journal article" date="2005" name="Nature">
        <title>The DNA sequence of the human X chromosome.</title>
        <authorList>
            <person name="Ross M.T."/>
            <person name="Grafham D.V."/>
            <person name="Coffey A.J."/>
            <person name="Scherer S."/>
            <person name="McLay K."/>
            <person name="Muzny D."/>
            <person name="Platzer M."/>
            <person name="Howell G.R."/>
            <person name="Burrows C."/>
            <person name="Bird C.P."/>
            <person name="Frankish A."/>
            <person name="Lovell F.L."/>
            <person name="Howe K.L."/>
            <person name="Ashurst J.L."/>
            <person name="Fulton R.S."/>
            <person name="Sudbrak R."/>
            <person name="Wen G."/>
            <person name="Jones M.C."/>
            <person name="Hurles M.E."/>
            <person name="Andrews T.D."/>
            <person name="Scott C.E."/>
            <person name="Searle S."/>
            <person name="Ramser J."/>
            <person name="Whittaker A."/>
            <person name="Deadman R."/>
            <person name="Carter N.P."/>
            <person name="Hunt S.E."/>
            <person name="Chen R."/>
            <person name="Cree A."/>
            <person name="Gunaratne P."/>
            <person name="Havlak P."/>
            <person name="Hodgson A."/>
            <person name="Metzker M.L."/>
            <person name="Richards S."/>
            <person name="Scott G."/>
            <person name="Steffen D."/>
            <person name="Sodergren E."/>
            <person name="Wheeler D.A."/>
            <person name="Worley K.C."/>
            <person name="Ainscough R."/>
            <person name="Ambrose K.D."/>
            <person name="Ansari-Lari M.A."/>
            <person name="Aradhya S."/>
            <person name="Ashwell R.I."/>
            <person name="Babbage A.K."/>
            <person name="Bagguley C.L."/>
            <person name="Ballabio A."/>
            <person name="Banerjee R."/>
            <person name="Barker G.E."/>
            <person name="Barlow K.F."/>
            <person name="Barrett I.P."/>
            <person name="Bates K.N."/>
            <person name="Beare D.M."/>
            <person name="Beasley H."/>
            <person name="Beasley O."/>
            <person name="Beck A."/>
            <person name="Bethel G."/>
            <person name="Blechschmidt K."/>
            <person name="Brady N."/>
            <person name="Bray-Allen S."/>
            <person name="Bridgeman A.M."/>
            <person name="Brown A.J."/>
            <person name="Brown M.J."/>
            <person name="Bonnin D."/>
            <person name="Bruford E.A."/>
            <person name="Buhay C."/>
            <person name="Burch P."/>
            <person name="Burford D."/>
            <person name="Burgess J."/>
            <person name="Burrill W."/>
            <person name="Burton J."/>
            <person name="Bye J.M."/>
            <person name="Carder C."/>
            <person name="Carrel L."/>
            <person name="Chako J."/>
            <person name="Chapman J.C."/>
            <person name="Chavez D."/>
            <person name="Chen E."/>
            <person name="Chen G."/>
            <person name="Chen Y."/>
            <person name="Chen Z."/>
            <person name="Chinault C."/>
            <person name="Ciccodicola A."/>
            <person name="Clark S.Y."/>
            <person name="Clarke G."/>
            <person name="Clee C.M."/>
            <person name="Clegg S."/>
            <person name="Clerc-Blankenburg K."/>
            <person name="Clifford K."/>
            <person name="Cobley V."/>
            <person name="Cole C.G."/>
            <person name="Conquer J.S."/>
            <person name="Corby N."/>
            <person name="Connor R.E."/>
            <person name="David R."/>
            <person name="Davies J."/>
            <person name="Davis C."/>
            <person name="Davis J."/>
            <person name="Delgado O."/>
            <person name="Deshazo D."/>
            <person name="Dhami P."/>
            <person name="Ding Y."/>
            <person name="Dinh H."/>
            <person name="Dodsworth S."/>
            <person name="Draper H."/>
            <person name="Dugan-Rocha S."/>
            <person name="Dunham A."/>
            <person name="Dunn M."/>
            <person name="Durbin K.J."/>
            <person name="Dutta I."/>
            <person name="Eades T."/>
            <person name="Ellwood M."/>
            <person name="Emery-Cohen A."/>
            <person name="Errington H."/>
            <person name="Evans K.L."/>
            <person name="Faulkner L."/>
            <person name="Francis F."/>
            <person name="Frankland J."/>
            <person name="Fraser A.E."/>
            <person name="Galgoczy P."/>
            <person name="Gilbert J."/>
            <person name="Gill R."/>
            <person name="Gloeckner G."/>
            <person name="Gregory S.G."/>
            <person name="Gribble S."/>
            <person name="Griffiths C."/>
            <person name="Grocock R."/>
            <person name="Gu Y."/>
            <person name="Gwilliam R."/>
            <person name="Hamilton C."/>
            <person name="Hart E.A."/>
            <person name="Hawes A."/>
            <person name="Heath P.D."/>
            <person name="Heitmann K."/>
            <person name="Hennig S."/>
            <person name="Hernandez J."/>
            <person name="Hinzmann B."/>
            <person name="Ho S."/>
            <person name="Hoffs M."/>
            <person name="Howden P.J."/>
            <person name="Huckle E.J."/>
            <person name="Hume J."/>
            <person name="Hunt P.J."/>
            <person name="Hunt A.R."/>
            <person name="Isherwood J."/>
            <person name="Jacob L."/>
            <person name="Johnson D."/>
            <person name="Jones S."/>
            <person name="de Jong P.J."/>
            <person name="Joseph S.S."/>
            <person name="Keenan S."/>
            <person name="Kelly S."/>
            <person name="Kershaw J.K."/>
            <person name="Khan Z."/>
            <person name="Kioschis P."/>
            <person name="Klages S."/>
            <person name="Knights A.J."/>
            <person name="Kosiura A."/>
            <person name="Kovar-Smith C."/>
            <person name="Laird G.K."/>
            <person name="Langford C."/>
            <person name="Lawlor S."/>
            <person name="Leversha M."/>
            <person name="Lewis L."/>
            <person name="Liu W."/>
            <person name="Lloyd C."/>
            <person name="Lloyd D.M."/>
            <person name="Loulseged H."/>
            <person name="Loveland J.E."/>
            <person name="Lovell J.D."/>
            <person name="Lozado R."/>
            <person name="Lu J."/>
            <person name="Lyne R."/>
            <person name="Ma J."/>
            <person name="Maheshwari M."/>
            <person name="Matthews L.H."/>
            <person name="McDowall J."/>
            <person name="McLaren S."/>
            <person name="McMurray A."/>
            <person name="Meidl P."/>
            <person name="Meitinger T."/>
            <person name="Milne S."/>
            <person name="Miner G."/>
            <person name="Mistry S.L."/>
            <person name="Morgan M."/>
            <person name="Morris S."/>
            <person name="Mueller I."/>
            <person name="Mullikin J.C."/>
            <person name="Nguyen N."/>
            <person name="Nordsiek G."/>
            <person name="Nyakatura G."/>
            <person name="O'dell C.N."/>
            <person name="Okwuonu G."/>
            <person name="Palmer S."/>
            <person name="Pandian R."/>
            <person name="Parker D."/>
            <person name="Parrish J."/>
            <person name="Pasternak S."/>
            <person name="Patel D."/>
            <person name="Pearce A.V."/>
            <person name="Pearson D.M."/>
            <person name="Pelan S.E."/>
            <person name="Perez L."/>
            <person name="Porter K.M."/>
            <person name="Ramsey Y."/>
            <person name="Reichwald K."/>
            <person name="Rhodes S."/>
            <person name="Ridler K.A."/>
            <person name="Schlessinger D."/>
            <person name="Schueler M.G."/>
            <person name="Sehra H.K."/>
            <person name="Shaw-Smith C."/>
            <person name="Shen H."/>
            <person name="Sheridan E.M."/>
            <person name="Shownkeen R."/>
            <person name="Skuce C.D."/>
            <person name="Smith M.L."/>
            <person name="Sotheran E.C."/>
            <person name="Steingruber H.E."/>
            <person name="Steward C.A."/>
            <person name="Storey R."/>
            <person name="Swann R.M."/>
            <person name="Swarbreck D."/>
            <person name="Tabor P.E."/>
            <person name="Taudien S."/>
            <person name="Taylor T."/>
            <person name="Teague B."/>
            <person name="Thomas K."/>
            <person name="Thorpe A."/>
            <person name="Timms K."/>
            <person name="Tracey A."/>
            <person name="Trevanion S."/>
            <person name="Tromans A.C."/>
            <person name="d'Urso M."/>
            <person name="Verduzco D."/>
            <person name="Villasana D."/>
            <person name="Waldron L."/>
            <person name="Wall M."/>
            <person name="Wang Q."/>
            <person name="Warren J."/>
            <person name="Warry G.L."/>
            <person name="Wei X."/>
            <person name="West A."/>
            <person name="Whitehead S.L."/>
            <person name="Whiteley M.N."/>
            <person name="Wilkinson J.E."/>
            <person name="Willey D.L."/>
            <person name="Williams G."/>
            <person name="Williams L."/>
            <person name="Williamson A."/>
            <person name="Williamson H."/>
            <person name="Wilming L."/>
            <person name="Woodmansey R.L."/>
            <person name="Wray P.W."/>
            <person name="Yen J."/>
            <person name="Zhang J."/>
            <person name="Zhou J."/>
            <person name="Zoghbi H."/>
            <person name="Zorilla S."/>
            <person name="Buck D."/>
            <person name="Reinhardt R."/>
            <person name="Poustka A."/>
            <person name="Rosenthal A."/>
            <person name="Lehrach H."/>
            <person name="Meindl A."/>
            <person name="Minx P.J."/>
            <person name="Hillier L.W."/>
            <person name="Willard H.F."/>
            <person name="Wilson R.K."/>
            <person name="Waterston R.H."/>
            <person name="Rice C.M."/>
            <person name="Vaudin M."/>
            <person name="Coulson A."/>
            <person name="Nelson D.L."/>
            <person name="Weinstock G."/>
            <person name="Sulston J.E."/>
            <person name="Durbin R.M."/>
            <person name="Hubbard T."/>
            <person name="Gibbs R.A."/>
            <person name="Beck S."/>
            <person name="Rogers J."/>
            <person name="Bentley D.R."/>
        </authorList>
    </citation>
    <scope>NUCLEOTIDE SEQUENCE [LARGE SCALE GENOMIC DNA]</scope>
</reference>
<reference key="2">
    <citation type="journal article" date="2004" name="Genome Res.">
        <title>The status, quality, and expansion of the NIH full-length cDNA project: the Mammalian Gene Collection (MGC).</title>
        <authorList>
            <consortium name="The MGC Project Team"/>
        </authorList>
    </citation>
    <scope>NUCLEOTIDE SEQUENCE [LARGE SCALE MRNA]</scope>
</reference>
<evidence type="ECO:0000256" key="1">
    <source>
        <dbReference type="SAM" id="MobiDB-lite"/>
    </source>
</evidence>
<evidence type="ECO:0000305" key="2"/>
<proteinExistence type="evidence at protein level"/>
<sequence>MSELLRARSQSSERGNDQESSQPVGSVIVQEPTEEKRQEEEPPTDNQGIAPSGEIENQAVPAFQGPDMEAFQQELALLKIEDEPGDGPDVREGIMPTFDLTKVLEAGDAQP</sequence>
<gene>
    <name type="primary">PAGE2</name>
    <name type="synonym">GAGEC2</name>
    <name type="synonym">GAGEE2</name>
</gene>
<keyword id="KW-1267">Proteomics identification</keyword>
<keyword id="KW-1185">Reference proteome</keyword>
<organism>
    <name type="scientific">Homo sapiens</name>
    <name type="common">Human</name>
    <dbReference type="NCBI Taxonomy" id="9606"/>
    <lineage>
        <taxon>Eukaryota</taxon>
        <taxon>Metazoa</taxon>
        <taxon>Chordata</taxon>
        <taxon>Craniata</taxon>
        <taxon>Vertebrata</taxon>
        <taxon>Euteleostomi</taxon>
        <taxon>Mammalia</taxon>
        <taxon>Eutheria</taxon>
        <taxon>Euarchontoglires</taxon>
        <taxon>Primates</taxon>
        <taxon>Haplorrhini</taxon>
        <taxon>Catarrhini</taxon>
        <taxon>Hominidae</taxon>
        <taxon>Homo</taxon>
    </lineage>
</organism>